<gene>
    <name type="primary">cln3</name>
    <name type="ORF">DDB_G0291157</name>
</gene>
<comment type="subcellular location">
    <subcellularLocation>
        <location evidence="1">Lysosome membrane</location>
        <topology evidence="1">Multi-pass membrane protein</topology>
    </subcellularLocation>
</comment>
<comment type="similarity">
    <text evidence="4">Belongs to the battenin family.</text>
</comment>
<evidence type="ECO:0000250" key="1"/>
<evidence type="ECO:0000255" key="2"/>
<evidence type="ECO:0000256" key="3">
    <source>
        <dbReference type="SAM" id="MobiDB-lite"/>
    </source>
</evidence>
<evidence type="ECO:0000305" key="4"/>
<reference key="1">
    <citation type="journal article" date="2005" name="Nature">
        <title>The genome of the social amoeba Dictyostelium discoideum.</title>
        <authorList>
            <person name="Eichinger L."/>
            <person name="Pachebat J.A."/>
            <person name="Gloeckner G."/>
            <person name="Rajandream M.A."/>
            <person name="Sucgang R."/>
            <person name="Berriman M."/>
            <person name="Song J."/>
            <person name="Olsen R."/>
            <person name="Szafranski K."/>
            <person name="Xu Q."/>
            <person name="Tunggal B."/>
            <person name="Kummerfeld S."/>
            <person name="Madera M."/>
            <person name="Konfortov B.A."/>
            <person name="Rivero F."/>
            <person name="Bankier A.T."/>
            <person name="Lehmann R."/>
            <person name="Hamlin N."/>
            <person name="Davies R."/>
            <person name="Gaudet P."/>
            <person name="Fey P."/>
            <person name="Pilcher K."/>
            <person name="Chen G."/>
            <person name="Saunders D."/>
            <person name="Sodergren E.J."/>
            <person name="Davis P."/>
            <person name="Kerhornou A."/>
            <person name="Nie X."/>
            <person name="Hall N."/>
            <person name="Anjard C."/>
            <person name="Hemphill L."/>
            <person name="Bason N."/>
            <person name="Farbrother P."/>
            <person name="Desany B."/>
            <person name="Just E."/>
            <person name="Morio T."/>
            <person name="Rost R."/>
            <person name="Churcher C.M."/>
            <person name="Cooper J."/>
            <person name="Haydock S."/>
            <person name="van Driessche N."/>
            <person name="Cronin A."/>
            <person name="Goodhead I."/>
            <person name="Muzny D.M."/>
            <person name="Mourier T."/>
            <person name="Pain A."/>
            <person name="Lu M."/>
            <person name="Harper D."/>
            <person name="Lindsay R."/>
            <person name="Hauser H."/>
            <person name="James K.D."/>
            <person name="Quiles M."/>
            <person name="Madan Babu M."/>
            <person name="Saito T."/>
            <person name="Buchrieser C."/>
            <person name="Wardroper A."/>
            <person name="Felder M."/>
            <person name="Thangavelu M."/>
            <person name="Johnson D."/>
            <person name="Knights A."/>
            <person name="Loulseged H."/>
            <person name="Mungall K.L."/>
            <person name="Oliver K."/>
            <person name="Price C."/>
            <person name="Quail M.A."/>
            <person name="Urushihara H."/>
            <person name="Hernandez J."/>
            <person name="Rabbinowitsch E."/>
            <person name="Steffen D."/>
            <person name="Sanders M."/>
            <person name="Ma J."/>
            <person name="Kohara Y."/>
            <person name="Sharp S."/>
            <person name="Simmonds M.N."/>
            <person name="Spiegler S."/>
            <person name="Tivey A."/>
            <person name="Sugano S."/>
            <person name="White B."/>
            <person name="Walker D."/>
            <person name="Woodward J.R."/>
            <person name="Winckler T."/>
            <person name="Tanaka Y."/>
            <person name="Shaulsky G."/>
            <person name="Schleicher M."/>
            <person name="Weinstock G.M."/>
            <person name="Rosenthal A."/>
            <person name="Cox E.C."/>
            <person name="Chisholm R.L."/>
            <person name="Gibbs R.A."/>
            <person name="Loomis W.F."/>
            <person name="Platzer M."/>
            <person name="Kay R.R."/>
            <person name="Williams J.G."/>
            <person name="Dear P.H."/>
            <person name="Noegel A.A."/>
            <person name="Barrell B.G."/>
            <person name="Kuspa A."/>
        </authorList>
    </citation>
    <scope>NUCLEOTIDE SEQUENCE [LARGE SCALE GENOMIC DNA]</scope>
    <source>
        <strain>AX4</strain>
    </source>
</reference>
<accession>Q54F25</accession>
<proteinExistence type="inferred from homology"/>
<sequence length="421" mass="46557">MGKDYTFIRNWISFHFMGNINNFSYCVVNAASGNLSAYFHNSKNIGIILWANIAFGLVSRLVNTFLIENVNSKLKIVVNCLFMSIGLIGVALSVYVNFGFCIAAIAFVGIASSFGESVILSYMKKFPAELVNGWSSGTGIAGVCGSLFYIAMVAAGLSNSTIFYMMLPTVAVYFLLFFFGLKVPNHLEEDRTDNHNNSNNSSNNSKYTEKQSLVKKDQLIEDIDDGGGAEVAPPGETKKQRYIRCARLVWFNAVNLALVYFFEYVASVGGADLALKKDPNNDNFFIANAFAIFSFCYQLGVLISRSSLQFVKIKHIGVITILQGINMVFWIIQAKYKMVTSVWVLFILMVYCGLLGGASYVNVFYLILHQKNIPNEDRELCINYAALLVTVGITLAACFILVMDHTFLASEVPKTDSSSST</sequence>
<keyword id="KW-0325">Glycoprotein</keyword>
<keyword id="KW-0458">Lysosome</keyword>
<keyword id="KW-0472">Membrane</keyword>
<keyword id="KW-1185">Reference proteome</keyword>
<keyword id="KW-0812">Transmembrane</keyword>
<keyword id="KW-1133">Transmembrane helix</keyword>
<name>CLN3_DICDI</name>
<dbReference type="EMBL" id="AAFI02000175">
    <property type="protein sequence ID" value="EAL61862.1"/>
    <property type="molecule type" value="Genomic_DNA"/>
</dbReference>
<dbReference type="RefSeq" id="XP_635365.1">
    <property type="nucleotide sequence ID" value="XM_630273.1"/>
</dbReference>
<dbReference type="SMR" id="Q54F25"/>
<dbReference type="FunCoup" id="Q54F25">
    <property type="interactions" value="56"/>
</dbReference>
<dbReference type="STRING" id="44689.Q54F25"/>
<dbReference type="GlyCosmos" id="Q54F25">
    <property type="glycosylation" value="5 sites, No reported glycans"/>
</dbReference>
<dbReference type="GlyGen" id="Q54F25">
    <property type="glycosylation" value="5 sites"/>
</dbReference>
<dbReference type="PaxDb" id="44689-DDB0233983"/>
<dbReference type="EnsemblProtists" id="EAL61862">
    <property type="protein sequence ID" value="EAL61862"/>
    <property type="gene ID" value="DDB_G0291157"/>
</dbReference>
<dbReference type="GeneID" id="8628013"/>
<dbReference type="KEGG" id="ddi:DDB_G0291157"/>
<dbReference type="dictyBase" id="DDB_G0291157">
    <property type="gene designation" value="cln3"/>
</dbReference>
<dbReference type="VEuPathDB" id="AmoebaDB:DDB_G0291157"/>
<dbReference type="eggNOG" id="KOG3880">
    <property type="taxonomic scope" value="Eukaryota"/>
</dbReference>
<dbReference type="HOGENOM" id="CLU_029663_1_2_1"/>
<dbReference type="InParanoid" id="Q54F25"/>
<dbReference type="OMA" id="ATILYCE"/>
<dbReference type="PhylomeDB" id="Q54F25"/>
<dbReference type="PRO" id="PR:Q54F25"/>
<dbReference type="Proteomes" id="UP000002195">
    <property type="component" value="Chromosome 5"/>
</dbReference>
<dbReference type="GO" id="GO:0000331">
    <property type="term" value="C:contractile vacuole"/>
    <property type="evidence" value="ECO:0000314"/>
    <property type="project" value="dictyBase"/>
</dbReference>
<dbReference type="GO" id="GO:0030139">
    <property type="term" value="C:endocytic vesicle"/>
    <property type="evidence" value="ECO:0000314"/>
    <property type="project" value="dictyBase"/>
</dbReference>
<dbReference type="GO" id="GO:0005794">
    <property type="term" value="C:Golgi apparatus"/>
    <property type="evidence" value="ECO:0000314"/>
    <property type="project" value="dictyBase"/>
</dbReference>
<dbReference type="GO" id="GO:0005765">
    <property type="term" value="C:lysosomal membrane"/>
    <property type="evidence" value="ECO:0007669"/>
    <property type="project" value="UniProtKB-SubCell"/>
</dbReference>
<dbReference type="GO" id="GO:0031152">
    <property type="term" value="P:aggregation involved in sorocarp development"/>
    <property type="evidence" value="ECO:0000315"/>
    <property type="project" value="dictyBase"/>
</dbReference>
<dbReference type="GO" id="GO:0098609">
    <property type="term" value="P:cell-cell adhesion"/>
    <property type="evidence" value="ECO:0000315"/>
    <property type="project" value="dictyBase"/>
</dbReference>
<dbReference type="GO" id="GO:0031589">
    <property type="term" value="P:cell-substrate adhesion"/>
    <property type="evidence" value="ECO:0000315"/>
    <property type="project" value="dictyBase"/>
</dbReference>
<dbReference type="GO" id="GO:0006972">
    <property type="term" value="P:hyperosmotic response"/>
    <property type="evidence" value="ECO:0000315"/>
    <property type="project" value="dictyBase"/>
</dbReference>
<dbReference type="GO" id="GO:0006971">
    <property type="term" value="P:hypotonic response"/>
    <property type="evidence" value="ECO:0000315"/>
    <property type="project" value="dictyBase"/>
</dbReference>
<dbReference type="GO" id="GO:0009992">
    <property type="term" value="P:intracellular water homeostasis"/>
    <property type="evidence" value="ECO:0000315"/>
    <property type="project" value="dictyBase"/>
</dbReference>
<dbReference type="GO" id="GO:0000281">
    <property type="term" value="P:mitotic cytokinesis"/>
    <property type="evidence" value="ECO:0000315"/>
    <property type="project" value="dictyBase"/>
</dbReference>
<dbReference type="GO" id="GO:0008285">
    <property type="term" value="P:negative regulation of cell population proliferation"/>
    <property type="evidence" value="ECO:0000315"/>
    <property type="project" value="dictyBase"/>
</dbReference>
<dbReference type="GO" id="GO:0050709">
    <property type="term" value="P:negative regulation of protein secretion"/>
    <property type="evidence" value="ECO:0000315"/>
    <property type="project" value="dictyBase"/>
</dbReference>
<dbReference type="GO" id="GO:0006907">
    <property type="term" value="P:pinocytosis"/>
    <property type="evidence" value="ECO:0000315"/>
    <property type="project" value="dictyBase"/>
</dbReference>
<dbReference type="GO" id="GO:0050714">
    <property type="term" value="P:positive regulation of protein secretion"/>
    <property type="evidence" value="ECO:0000315"/>
    <property type="project" value="dictyBase"/>
</dbReference>
<dbReference type="GO" id="GO:0050708">
    <property type="term" value="P:regulation of protein secretion"/>
    <property type="evidence" value="ECO:0000315"/>
    <property type="project" value="dictyBase"/>
</dbReference>
<dbReference type="GO" id="GO:0031156">
    <property type="term" value="P:regulation of sorocarp development"/>
    <property type="evidence" value="ECO:0000315"/>
    <property type="project" value="dictyBase"/>
</dbReference>
<dbReference type="Gene3D" id="1.20.1250.20">
    <property type="entry name" value="MFS general substrate transporter like domains"/>
    <property type="match status" value="1"/>
</dbReference>
<dbReference type="InterPro" id="IPR003492">
    <property type="entry name" value="Battenin_disease_Cln3"/>
</dbReference>
<dbReference type="InterPro" id="IPR036259">
    <property type="entry name" value="MFS_trans_sf"/>
</dbReference>
<dbReference type="PANTHER" id="PTHR10981">
    <property type="entry name" value="BATTENIN"/>
    <property type="match status" value="1"/>
</dbReference>
<dbReference type="PANTHER" id="PTHR10981:SF7">
    <property type="entry name" value="BATTENIN"/>
    <property type="match status" value="1"/>
</dbReference>
<dbReference type="Pfam" id="PF02487">
    <property type="entry name" value="CLN3"/>
    <property type="match status" value="1"/>
</dbReference>
<dbReference type="PRINTS" id="PR01315">
    <property type="entry name" value="BATTENIN"/>
</dbReference>
<dbReference type="SUPFAM" id="SSF103473">
    <property type="entry name" value="MFS general substrate transporter"/>
    <property type="match status" value="1"/>
</dbReference>
<protein>
    <recommendedName>
        <fullName>Battenin</fullName>
    </recommendedName>
    <alternativeName>
        <fullName>Protein CLN3 homolog</fullName>
    </alternativeName>
</protein>
<feature type="chain" id="PRO_0000328031" description="Battenin">
    <location>
        <begin position="1"/>
        <end position="421"/>
    </location>
</feature>
<feature type="transmembrane region" description="Helical" evidence="2">
    <location>
        <begin position="13"/>
        <end position="35"/>
    </location>
</feature>
<feature type="transmembrane region" description="Helical" evidence="2">
    <location>
        <begin position="47"/>
        <end position="67"/>
    </location>
</feature>
<feature type="transmembrane region" description="Helical" evidence="2">
    <location>
        <begin position="74"/>
        <end position="96"/>
    </location>
</feature>
<feature type="transmembrane region" description="Helical" evidence="2">
    <location>
        <begin position="101"/>
        <end position="123"/>
    </location>
</feature>
<feature type="transmembrane region" description="Helical" evidence="2">
    <location>
        <begin position="137"/>
        <end position="157"/>
    </location>
</feature>
<feature type="transmembrane region" description="Helical" evidence="2">
    <location>
        <begin position="161"/>
        <end position="181"/>
    </location>
</feature>
<feature type="transmembrane region" description="Helical" evidence="2">
    <location>
        <begin position="248"/>
        <end position="268"/>
    </location>
</feature>
<feature type="transmembrane region" description="Helical" evidence="2">
    <location>
        <begin position="284"/>
        <end position="304"/>
    </location>
</feature>
<feature type="transmembrane region" description="Helical" evidence="2">
    <location>
        <begin position="313"/>
        <end position="333"/>
    </location>
</feature>
<feature type="transmembrane region" description="Helical" evidence="2">
    <location>
        <begin position="338"/>
        <end position="358"/>
    </location>
</feature>
<feature type="transmembrane region" description="Helical" evidence="2">
    <location>
        <begin position="382"/>
        <end position="402"/>
    </location>
</feature>
<feature type="region of interest" description="Disordered" evidence="3">
    <location>
        <begin position="190"/>
        <end position="211"/>
    </location>
</feature>
<feature type="compositionally biased region" description="Low complexity" evidence="3">
    <location>
        <begin position="195"/>
        <end position="205"/>
    </location>
</feature>
<feature type="glycosylation site" description="N-linked (GlcNAc...) asparagine" evidence="2">
    <location>
        <position position="159"/>
    </location>
</feature>
<feature type="glycosylation site" description="N-linked (GlcNAc...) asparagine" evidence="2">
    <location>
        <position position="196"/>
    </location>
</feature>
<feature type="glycosylation site" description="N-linked (GlcNAc...) asparagine" evidence="2">
    <location>
        <position position="199"/>
    </location>
</feature>
<feature type="glycosylation site" description="N-linked (GlcNAc...) asparagine" evidence="2">
    <location>
        <position position="200"/>
    </location>
</feature>
<feature type="glycosylation site" description="N-linked (GlcNAc...) asparagine" evidence="2">
    <location>
        <position position="203"/>
    </location>
</feature>
<organism>
    <name type="scientific">Dictyostelium discoideum</name>
    <name type="common">Social amoeba</name>
    <dbReference type="NCBI Taxonomy" id="44689"/>
    <lineage>
        <taxon>Eukaryota</taxon>
        <taxon>Amoebozoa</taxon>
        <taxon>Evosea</taxon>
        <taxon>Eumycetozoa</taxon>
        <taxon>Dictyostelia</taxon>
        <taxon>Dictyosteliales</taxon>
        <taxon>Dictyosteliaceae</taxon>
        <taxon>Dictyostelium</taxon>
    </lineage>
</organism>